<proteinExistence type="predicted"/>
<reference key="1">
    <citation type="journal article" date="2009" name="Science">
        <title>Loss of function of a proline-containing protein confers durable disease resistance in rice.</title>
        <authorList>
            <person name="Fukuoka S."/>
            <person name="Saka N."/>
            <person name="Koga H."/>
            <person name="Ono K."/>
            <person name="Shimizu T."/>
            <person name="Ebana K."/>
            <person name="Hayashi N."/>
            <person name="Takahashi A."/>
            <person name="Hirochika H."/>
            <person name="Okuno K."/>
            <person name="Yano M."/>
        </authorList>
    </citation>
    <scope>NUCLEOTIDE SEQUENCE [GENOMIC DNA]</scope>
    <scope>FUNCTION</scope>
    <scope>DISRUPTION PHENOTYPE</scope>
    <source>
        <strain>cv. Kasalath</strain>
    </source>
</reference>
<reference key="2">
    <citation type="journal article" date="2002" name="Nature">
        <title>Sequence and analysis of rice chromosome 4.</title>
        <authorList>
            <person name="Feng Q."/>
            <person name="Zhang Y."/>
            <person name="Hao P."/>
            <person name="Wang S."/>
            <person name="Fu G."/>
            <person name="Huang Y."/>
            <person name="Li Y."/>
            <person name="Zhu J."/>
            <person name="Liu Y."/>
            <person name="Hu X."/>
            <person name="Jia P."/>
            <person name="Zhang Y."/>
            <person name="Zhao Q."/>
            <person name="Ying K."/>
            <person name="Yu S."/>
            <person name="Tang Y."/>
            <person name="Weng Q."/>
            <person name="Zhang L."/>
            <person name="Lu Y."/>
            <person name="Mu J."/>
            <person name="Lu Y."/>
            <person name="Zhang L.S."/>
            <person name="Yu Z."/>
            <person name="Fan D."/>
            <person name="Liu X."/>
            <person name="Lu T."/>
            <person name="Li C."/>
            <person name="Wu Y."/>
            <person name="Sun T."/>
            <person name="Lei H."/>
            <person name="Li T."/>
            <person name="Hu H."/>
            <person name="Guan J."/>
            <person name="Wu M."/>
            <person name="Zhang R."/>
            <person name="Zhou B."/>
            <person name="Chen Z."/>
            <person name="Chen L."/>
            <person name="Jin Z."/>
            <person name="Wang R."/>
            <person name="Yin H."/>
            <person name="Cai Z."/>
            <person name="Ren S."/>
            <person name="Lv G."/>
            <person name="Gu W."/>
            <person name="Zhu G."/>
            <person name="Tu Y."/>
            <person name="Jia J."/>
            <person name="Zhang Y."/>
            <person name="Chen J."/>
            <person name="Kang H."/>
            <person name="Chen X."/>
            <person name="Shao C."/>
            <person name="Sun Y."/>
            <person name="Hu Q."/>
            <person name="Zhang X."/>
            <person name="Zhang W."/>
            <person name="Wang L."/>
            <person name="Ding C."/>
            <person name="Sheng H."/>
            <person name="Gu J."/>
            <person name="Chen S."/>
            <person name="Ni L."/>
            <person name="Zhu F."/>
            <person name="Chen W."/>
            <person name="Lan L."/>
            <person name="Lai Y."/>
            <person name="Cheng Z."/>
            <person name="Gu M."/>
            <person name="Jiang J."/>
            <person name="Li J."/>
            <person name="Hong G."/>
            <person name="Xue Y."/>
            <person name="Han B."/>
        </authorList>
    </citation>
    <scope>NUCLEOTIDE SEQUENCE [LARGE SCALE GENOMIC DNA]</scope>
    <source>
        <strain>cv. Guang-Lu-Ai No.4</strain>
    </source>
</reference>
<reference key="3">
    <citation type="journal article" date="2005" name="PLoS Biol.">
        <title>The genomes of Oryza sativa: a history of duplications.</title>
        <authorList>
            <person name="Yu J."/>
            <person name="Wang J."/>
            <person name="Lin W."/>
            <person name="Li S."/>
            <person name="Li H."/>
            <person name="Zhou J."/>
            <person name="Ni P."/>
            <person name="Dong W."/>
            <person name="Hu S."/>
            <person name="Zeng C."/>
            <person name="Zhang J."/>
            <person name="Zhang Y."/>
            <person name="Li R."/>
            <person name="Xu Z."/>
            <person name="Li S."/>
            <person name="Li X."/>
            <person name="Zheng H."/>
            <person name="Cong L."/>
            <person name="Lin L."/>
            <person name="Yin J."/>
            <person name="Geng J."/>
            <person name="Li G."/>
            <person name="Shi J."/>
            <person name="Liu J."/>
            <person name="Lv H."/>
            <person name="Li J."/>
            <person name="Wang J."/>
            <person name="Deng Y."/>
            <person name="Ran L."/>
            <person name="Shi X."/>
            <person name="Wang X."/>
            <person name="Wu Q."/>
            <person name="Li C."/>
            <person name="Ren X."/>
            <person name="Wang J."/>
            <person name="Wang X."/>
            <person name="Li D."/>
            <person name="Liu D."/>
            <person name="Zhang X."/>
            <person name="Ji Z."/>
            <person name="Zhao W."/>
            <person name="Sun Y."/>
            <person name="Zhang Z."/>
            <person name="Bao J."/>
            <person name="Han Y."/>
            <person name="Dong L."/>
            <person name="Ji J."/>
            <person name="Chen P."/>
            <person name="Wu S."/>
            <person name="Liu J."/>
            <person name="Xiao Y."/>
            <person name="Bu D."/>
            <person name="Tan J."/>
            <person name="Yang L."/>
            <person name="Ye C."/>
            <person name="Zhang J."/>
            <person name="Xu J."/>
            <person name="Zhou Y."/>
            <person name="Yu Y."/>
            <person name="Zhang B."/>
            <person name="Zhuang S."/>
            <person name="Wei H."/>
            <person name="Liu B."/>
            <person name="Lei M."/>
            <person name="Yu H."/>
            <person name="Li Y."/>
            <person name="Xu H."/>
            <person name="Wei S."/>
            <person name="He X."/>
            <person name="Fang L."/>
            <person name="Zhang Z."/>
            <person name="Zhang Y."/>
            <person name="Huang X."/>
            <person name="Su Z."/>
            <person name="Tong W."/>
            <person name="Li J."/>
            <person name="Tong Z."/>
            <person name="Li S."/>
            <person name="Ye J."/>
            <person name="Wang L."/>
            <person name="Fang L."/>
            <person name="Lei T."/>
            <person name="Chen C.-S."/>
            <person name="Chen H.-C."/>
            <person name="Xu Z."/>
            <person name="Li H."/>
            <person name="Huang H."/>
            <person name="Zhang F."/>
            <person name="Xu H."/>
            <person name="Li N."/>
            <person name="Zhao C."/>
            <person name="Li S."/>
            <person name="Dong L."/>
            <person name="Huang Y."/>
            <person name="Li L."/>
            <person name="Xi Y."/>
            <person name="Qi Q."/>
            <person name="Li W."/>
            <person name="Zhang B."/>
            <person name="Hu W."/>
            <person name="Zhang Y."/>
            <person name="Tian X."/>
            <person name="Jiao Y."/>
            <person name="Liang X."/>
            <person name="Jin J."/>
            <person name="Gao L."/>
            <person name="Zheng W."/>
            <person name="Hao B."/>
            <person name="Liu S.-M."/>
            <person name="Wang W."/>
            <person name="Yuan L."/>
            <person name="Cao M."/>
            <person name="McDermott J."/>
            <person name="Samudrala R."/>
            <person name="Wang J."/>
            <person name="Wong G.K.-S."/>
            <person name="Yang H."/>
        </authorList>
    </citation>
    <scope>NUCLEOTIDE SEQUENCE [LARGE SCALE GENOMIC DNA]</scope>
    <source>
        <strain>cv. 93-11</strain>
    </source>
</reference>
<reference key="4">
    <citation type="journal article" date="2008" name="Mol. Plant Microbe Interact.">
        <title>A genome-wide meta-analysis of rice blast resistance genes and quantitative trait loci provides new insights into partial and complete resistance.</title>
        <authorList>
            <person name="Ballini E."/>
            <person name="Morel J.-B."/>
            <person name="Droc G."/>
            <person name="Price A."/>
            <person name="Courtois B."/>
            <person name="Notteghem J.-L."/>
            <person name="Tharreau D."/>
        </authorList>
    </citation>
    <scope>REVIEW</scope>
</reference>
<reference key="5">
    <citation type="journal article" date="2013" name="Mol. Biol. Rep.">
        <title>Blast resistance in rice: a review of conventional breeding to molecular approaches.</title>
        <authorList>
            <person name="Miah G."/>
            <person name="Rafii M.Y."/>
            <person name="Ismail M.R."/>
            <person name="Puteh A.B."/>
            <person name="Rahim H.A."/>
            <person name="Asfaliza R."/>
            <person name="Latif M.A."/>
        </authorList>
    </citation>
    <scope>REVIEW</scope>
</reference>
<organism>
    <name type="scientific">Oryza sativa subsp. indica</name>
    <name type="common">Rice</name>
    <dbReference type="NCBI Taxonomy" id="39946"/>
    <lineage>
        <taxon>Eukaryota</taxon>
        <taxon>Viridiplantae</taxon>
        <taxon>Streptophyta</taxon>
        <taxon>Embryophyta</taxon>
        <taxon>Tracheophyta</taxon>
        <taxon>Spermatophyta</taxon>
        <taxon>Magnoliopsida</taxon>
        <taxon>Liliopsida</taxon>
        <taxon>Poales</taxon>
        <taxon>Poaceae</taxon>
        <taxon>BOP clade</taxon>
        <taxon>Oryzoideae</taxon>
        <taxon>Oryzeae</taxon>
        <taxon>Oryzinae</taxon>
        <taxon>Oryza</taxon>
        <taxon>Oryza sativa</taxon>
    </lineage>
</organism>
<gene>
    <name evidence="4" type="primary">PI21</name>
    <name evidence="8" type="ORF">OsI_15741</name>
    <name evidence="7" type="ORF">OSIGBa0113L04.7</name>
    <name evidence="6" type="ORF">OSIGBa0155K12.2</name>
</gene>
<dbReference type="EMBL" id="AB430854">
    <property type="protein sequence ID" value="BAG72124.1"/>
    <property type="molecule type" value="Genomic_DNA"/>
</dbReference>
<dbReference type="EMBL" id="CR855095">
    <property type="protein sequence ID" value="CAH66399.1"/>
    <property type="status" value="ALT_SEQ"/>
    <property type="molecule type" value="Genomic_DNA"/>
</dbReference>
<dbReference type="EMBL" id="CR855104">
    <property type="protein sequence ID" value="CAH66470.1"/>
    <property type="status" value="ALT_SEQ"/>
    <property type="molecule type" value="Genomic_DNA"/>
</dbReference>
<dbReference type="EMBL" id="CM000129">
    <property type="protein sequence ID" value="EAY93963.1"/>
    <property type="molecule type" value="Genomic_DNA"/>
</dbReference>
<dbReference type="SMR" id="A2XT03"/>
<dbReference type="STRING" id="39946.A2XT03"/>
<dbReference type="EnsemblPlants" id="BGIOSGA015169-TA">
    <property type="protein sequence ID" value="BGIOSGA015169-PA"/>
    <property type="gene ID" value="BGIOSGA015169"/>
</dbReference>
<dbReference type="EnsemblPlants" id="OsLiXu_04g0012100.01">
    <property type="protein sequence ID" value="OsLiXu_04g0012100.01"/>
    <property type="gene ID" value="OsLiXu_04g0012100"/>
</dbReference>
<dbReference type="EnsemblPlants" id="OsLiXu_04g0012100.02">
    <property type="protein sequence ID" value="OsLiXu_04g0012100.02"/>
    <property type="gene ID" value="OsLiXu_04g0012100"/>
</dbReference>
<dbReference type="EnsemblPlants" id="OsLiXu_04g0012100.03">
    <property type="protein sequence ID" value="OsLiXu_04g0012100.03"/>
    <property type="gene ID" value="OsLiXu_04g0012100"/>
</dbReference>
<dbReference type="Gramene" id="BGIOSGA015169-TA">
    <property type="protein sequence ID" value="BGIOSGA015169-PA"/>
    <property type="gene ID" value="BGIOSGA015169"/>
</dbReference>
<dbReference type="Gramene" id="OsLiXu_04g0012100.01">
    <property type="protein sequence ID" value="OsLiXu_04g0012100.01"/>
    <property type="gene ID" value="OsLiXu_04g0012100"/>
</dbReference>
<dbReference type="Gramene" id="OsLiXu_04g0012100.02">
    <property type="protein sequence ID" value="OsLiXu_04g0012100.02"/>
    <property type="gene ID" value="OsLiXu_04g0012100"/>
</dbReference>
<dbReference type="Gramene" id="OsLiXu_04g0012100.03">
    <property type="protein sequence ID" value="OsLiXu_04g0012100.03"/>
    <property type="gene ID" value="OsLiXu_04g0012100"/>
</dbReference>
<dbReference type="HOGENOM" id="CLU_060839_1_0_1"/>
<dbReference type="OMA" id="CGIRPWP"/>
<dbReference type="Proteomes" id="UP000007015">
    <property type="component" value="Chromosome 4"/>
</dbReference>
<dbReference type="GO" id="GO:0046872">
    <property type="term" value="F:metal ion binding"/>
    <property type="evidence" value="ECO:0007669"/>
    <property type="project" value="UniProtKB-KW"/>
</dbReference>
<dbReference type="GO" id="GO:0050832">
    <property type="term" value="P:defense response to fungus"/>
    <property type="evidence" value="ECO:0007669"/>
    <property type="project" value="EnsemblPlants"/>
</dbReference>
<dbReference type="GO" id="GO:1900150">
    <property type="term" value="P:regulation of defense response to fungus"/>
    <property type="evidence" value="ECO:0000315"/>
    <property type="project" value="UniProtKB"/>
</dbReference>
<dbReference type="Gene3D" id="3.30.70.100">
    <property type="match status" value="1"/>
</dbReference>
<dbReference type="InterPro" id="IPR006121">
    <property type="entry name" value="HMA_dom"/>
</dbReference>
<dbReference type="InterPro" id="IPR044169">
    <property type="entry name" value="PI21"/>
</dbReference>
<dbReference type="PANTHER" id="PTHR47488">
    <property type="entry name" value="HEAVY METAL TRANSPORT/DETOXIFICATION SUPERFAMILY PROTEIN"/>
    <property type="match status" value="1"/>
</dbReference>
<dbReference type="PANTHER" id="PTHR47488:SF12">
    <property type="entry name" value="PROTEIN PYRICULARIA ORYZAE RESISTANCE 21"/>
    <property type="match status" value="1"/>
</dbReference>
<dbReference type="PROSITE" id="PS50846">
    <property type="entry name" value="HMA_2"/>
    <property type="match status" value="1"/>
</dbReference>
<name>PI21_ORYSI</name>
<evidence type="ECO:0000255" key="1">
    <source>
        <dbReference type="PROSITE-ProRule" id="PRU00280"/>
    </source>
</evidence>
<evidence type="ECO:0000256" key="2">
    <source>
        <dbReference type="SAM" id="MobiDB-lite"/>
    </source>
</evidence>
<evidence type="ECO:0000269" key="3">
    <source>
    </source>
</evidence>
<evidence type="ECO:0000303" key="4">
    <source>
    </source>
</evidence>
<evidence type="ECO:0000305" key="5"/>
<evidence type="ECO:0000312" key="6">
    <source>
        <dbReference type="EMBL" id="CAH66399.1"/>
    </source>
</evidence>
<evidence type="ECO:0000312" key="7">
    <source>
        <dbReference type="EMBL" id="CAH66470.1"/>
    </source>
</evidence>
<evidence type="ECO:0000312" key="8">
    <source>
        <dbReference type="EMBL" id="EAY93963.1"/>
    </source>
</evidence>
<keyword id="KW-0479">Metal-binding</keyword>
<keyword id="KW-0611">Plant defense</keyword>
<keyword id="KW-1185">Reference proteome</keyword>
<protein>
    <recommendedName>
        <fullName evidence="4">Protein PYRICULARIA ORYZAE RESISTANCE 21</fullName>
        <shortName evidence="4">Pi21</shortName>
    </recommendedName>
</protein>
<comment type="function">
    <text evidence="3">Involved in defense responses. Contributes to slowing defense responses toward Magnaporthe oryzae.</text>
</comment>
<comment type="disruption phenotype">
    <text evidence="3">The pi21 allele confers an improved non-race-specific blast resistance toward Magnaporthe oryzae.</text>
</comment>
<comment type="sequence caution" evidence="5">
    <conflict type="erroneous gene model prediction">
        <sequence resource="EMBL-CDS" id="CAH66399"/>
    </conflict>
</comment>
<comment type="sequence caution" evidence="5">
    <conflict type="erroneous gene model prediction">
        <sequence resource="EMBL-CDS" id="CAH66470"/>
    </conflict>
</comment>
<feature type="chain" id="PRO_0000437420" description="Protein PYRICULARIA ORYZAE RESISTANCE 21">
    <location>
        <begin position="1"/>
        <end position="263"/>
    </location>
</feature>
<feature type="domain" description="HMA" evidence="1">
    <location>
        <begin position="1"/>
        <end position="68"/>
    </location>
</feature>
<feature type="region of interest" description="Disordered" evidence="2">
    <location>
        <begin position="126"/>
        <end position="153"/>
    </location>
</feature>
<feature type="compositionally biased region" description="Basic and acidic residues" evidence="2">
    <location>
        <begin position="139"/>
        <end position="153"/>
    </location>
</feature>
<feature type="binding site" evidence="1">
    <location>
        <position position="12"/>
    </location>
    <ligand>
        <name>a metal cation</name>
        <dbReference type="ChEBI" id="CHEBI:25213"/>
    </ligand>
</feature>
<feature type="binding site" evidence="1">
    <location>
        <position position="15"/>
    </location>
    <ligand>
        <name>a metal cation</name>
        <dbReference type="ChEBI" id="CHEBI:25213"/>
    </ligand>
</feature>
<feature type="sequence conflict" description="In Ref. 1; BAG72124 and 2; CAH66399/CAH66470." evidence="5" ref="1 2">
    <original>L</original>
    <variation>S</variation>
    <location>
        <position position="80"/>
    </location>
</feature>
<accession>A2XT03</accession>
<accession>B5UA06</accession>
<accession>Q01LA1</accession>
<sequence length="263" mass="29131">MGILVISVDLQCCRCDAKIRKVLGCLEEEYCIEKVEYDVKNNRVIVRGKFDPEKLCKKIWCKAGKIIKEILIVDVWPPPLPPPCKPPPCEKPPEDCKPKPCHCCSCEKPKPKPKPCHCEKPKPCHCEKPKPCEKPPPCKPEEPPKPPPEKPPPKPECKLVPYPYPVPYPYAGQWCCPKPEPPKPPPEPPKEPEPPKPCGCSHAFVCVCKPAPPPPPPCGCSGGHGNCGCGIRPWPPQVWPPPPVCPPPPWCYTEDNANACSIM</sequence>